<proteinExistence type="evidence at transcript level"/>
<comment type="subcellular location">
    <subcellularLocation>
        <location evidence="2">Membrane</location>
        <topology evidence="2">Single-pass membrane protein</topology>
    </subcellularLocation>
</comment>
<reference key="1">
    <citation type="submission" date="2005-09" db="EMBL/GenBank/DDBJ databases">
        <authorList>
            <consortium name="NIH - Mammalian Gene Collection (MGC) project"/>
        </authorList>
    </citation>
    <scope>NUCLEOTIDE SEQUENCE [LARGE SCALE MRNA]</scope>
    <source>
        <strain>Hereford</strain>
        <tissue>Colon</tissue>
    </source>
</reference>
<protein>
    <recommendedName>
        <fullName>Ankyrin repeat domain-containing protein 46</fullName>
    </recommendedName>
</protein>
<gene>
    <name type="primary">ANKRD46</name>
</gene>
<feature type="chain" id="PRO_0000244576" description="Ankyrin repeat domain-containing protein 46">
    <location>
        <begin position="1"/>
        <end position="228"/>
    </location>
</feature>
<feature type="transmembrane region" description="Helical" evidence="1">
    <location>
        <begin position="195"/>
        <end position="215"/>
    </location>
</feature>
<feature type="repeat" description="ANK 1">
    <location>
        <begin position="11"/>
        <end position="40"/>
    </location>
</feature>
<feature type="repeat" description="ANK 2">
    <location>
        <begin position="44"/>
        <end position="73"/>
    </location>
</feature>
<feature type="repeat" description="ANK 3">
    <location>
        <begin position="77"/>
        <end position="103"/>
    </location>
</feature>
<feature type="repeat" description="ANK 4">
    <location>
        <begin position="107"/>
        <end position="138"/>
    </location>
</feature>
<evidence type="ECO:0000255" key="1"/>
<evidence type="ECO:0000305" key="2"/>
<dbReference type="EMBL" id="BC104580">
    <property type="protein sequence ID" value="AAI04581.1"/>
    <property type="molecule type" value="mRNA"/>
</dbReference>
<dbReference type="RefSeq" id="NP_001029791.1">
    <property type="nucleotide sequence ID" value="NM_001034619.1"/>
</dbReference>
<dbReference type="SMR" id="Q3SX00"/>
<dbReference type="FunCoup" id="Q3SX00">
    <property type="interactions" value="1494"/>
</dbReference>
<dbReference type="STRING" id="9913.ENSBTAP00000001658"/>
<dbReference type="PaxDb" id="9913-ENSBTAP00000001658"/>
<dbReference type="Ensembl" id="ENSBTAT00000001658.4">
    <property type="protein sequence ID" value="ENSBTAP00000001658.3"/>
    <property type="gene ID" value="ENSBTAG00000001254.5"/>
</dbReference>
<dbReference type="GeneID" id="534898"/>
<dbReference type="KEGG" id="bta:534898"/>
<dbReference type="CTD" id="157567"/>
<dbReference type="VEuPathDB" id="HostDB:ENSBTAG00000001254"/>
<dbReference type="VGNC" id="VGNC:25932">
    <property type="gene designation" value="ANKRD46"/>
</dbReference>
<dbReference type="eggNOG" id="KOG0508">
    <property type="taxonomic scope" value="Eukaryota"/>
</dbReference>
<dbReference type="GeneTree" id="ENSGT00940000157094"/>
<dbReference type="HOGENOM" id="CLU_084801_0_0_1"/>
<dbReference type="InParanoid" id="Q3SX00"/>
<dbReference type="OMA" id="EYQGNTA"/>
<dbReference type="OrthoDB" id="21416at2759"/>
<dbReference type="TreeFam" id="TF330790"/>
<dbReference type="Proteomes" id="UP000009136">
    <property type="component" value="Chromosome 14"/>
</dbReference>
<dbReference type="Bgee" id="ENSBTAG00000001254">
    <property type="expression patterns" value="Expressed in occipital lobe and 106 other cell types or tissues"/>
</dbReference>
<dbReference type="GO" id="GO:0016020">
    <property type="term" value="C:membrane"/>
    <property type="evidence" value="ECO:0007669"/>
    <property type="project" value="UniProtKB-SubCell"/>
</dbReference>
<dbReference type="Gene3D" id="1.25.40.20">
    <property type="entry name" value="Ankyrin repeat-containing domain"/>
    <property type="match status" value="1"/>
</dbReference>
<dbReference type="InterPro" id="IPR039323">
    <property type="entry name" value="ANKRD_45/46/60"/>
</dbReference>
<dbReference type="InterPro" id="IPR002110">
    <property type="entry name" value="Ankyrin_rpt"/>
</dbReference>
<dbReference type="InterPro" id="IPR036770">
    <property type="entry name" value="Ankyrin_rpt-contain_sf"/>
</dbReference>
<dbReference type="PANTHER" id="PTHR22677">
    <property type="entry name" value="ANKYRIN REPEAT DOMAIN-CONTAINING PROTEIN 60"/>
    <property type="match status" value="1"/>
</dbReference>
<dbReference type="PANTHER" id="PTHR22677:SF4">
    <property type="entry name" value="USHER SYNDROME TYPE-1G PROTEIN-LIKE PROTEIN"/>
    <property type="match status" value="1"/>
</dbReference>
<dbReference type="Pfam" id="PF12796">
    <property type="entry name" value="Ank_2"/>
    <property type="match status" value="1"/>
</dbReference>
<dbReference type="SMART" id="SM00248">
    <property type="entry name" value="ANK"/>
    <property type="match status" value="3"/>
</dbReference>
<dbReference type="SUPFAM" id="SSF48403">
    <property type="entry name" value="Ankyrin repeat"/>
    <property type="match status" value="1"/>
</dbReference>
<dbReference type="PROSITE" id="PS50297">
    <property type="entry name" value="ANK_REP_REGION"/>
    <property type="match status" value="1"/>
</dbReference>
<dbReference type="PROSITE" id="PS50088">
    <property type="entry name" value="ANK_REPEAT"/>
    <property type="match status" value="2"/>
</dbReference>
<keyword id="KW-0040">ANK repeat</keyword>
<keyword id="KW-0472">Membrane</keyword>
<keyword id="KW-1185">Reference proteome</keyword>
<keyword id="KW-0677">Repeat</keyword>
<keyword id="KW-0812">Transmembrane</keyword>
<keyword id="KW-1133">Transmembrane helix</keyword>
<accession>Q3SX00</accession>
<name>ANR46_BOVIN</name>
<sequence>MSYVFVNDSSQTNVPLLQACIDGDFNYSKRLLESGFDPNIRDSRGRTGLHLAAARGNVDICQLLHKFGADLLATDYQGNTALHLCGHVDTIQFLVSNGLKIDICNHQGATPLVLAKRRGVNKDVIRLLESLEEQEVKGFNRGTHSKLETMQTAESESAMESHSLLNPNLQQGEGVLSSFRTTWQEFVEDLGFWRVLLLIFVIALLSLGIAYYVSGVLPFVENQPELVH</sequence>
<organism>
    <name type="scientific">Bos taurus</name>
    <name type="common">Bovine</name>
    <dbReference type="NCBI Taxonomy" id="9913"/>
    <lineage>
        <taxon>Eukaryota</taxon>
        <taxon>Metazoa</taxon>
        <taxon>Chordata</taxon>
        <taxon>Craniata</taxon>
        <taxon>Vertebrata</taxon>
        <taxon>Euteleostomi</taxon>
        <taxon>Mammalia</taxon>
        <taxon>Eutheria</taxon>
        <taxon>Laurasiatheria</taxon>
        <taxon>Artiodactyla</taxon>
        <taxon>Ruminantia</taxon>
        <taxon>Pecora</taxon>
        <taxon>Bovidae</taxon>
        <taxon>Bovinae</taxon>
        <taxon>Bos</taxon>
    </lineage>
</organism>